<organism>
    <name type="scientific">Campylobacter hominis (strain ATCC BAA-381 / DSM 21671 / CCUG 45161 / LMG 19568 / NCTC 13146 / CH001A)</name>
    <dbReference type="NCBI Taxonomy" id="360107"/>
    <lineage>
        <taxon>Bacteria</taxon>
        <taxon>Pseudomonadati</taxon>
        <taxon>Campylobacterota</taxon>
        <taxon>Epsilonproteobacteria</taxon>
        <taxon>Campylobacterales</taxon>
        <taxon>Campylobacteraceae</taxon>
        <taxon>Campylobacter</taxon>
    </lineage>
</organism>
<accession>A7I3U3</accession>
<protein>
    <recommendedName>
        <fullName evidence="1">Large ribosomal subunit protein uL11</fullName>
    </recommendedName>
    <alternativeName>
        <fullName evidence="2">50S ribosomal protein L11</fullName>
    </alternativeName>
</protein>
<gene>
    <name evidence="1" type="primary">rplK</name>
    <name type="ordered locus">CHAB381_1667</name>
</gene>
<dbReference type="EMBL" id="CP000776">
    <property type="protein sequence ID" value="ABS52294.1"/>
    <property type="molecule type" value="Genomic_DNA"/>
</dbReference>
<dbReference type="RefSeq" id="WP_012109490.1">
    <property type="nucleotide sequence ID" value="NC_009714.1"/>
</dbReference>
<dbReference type="SMR" id="A7I3U3"/>
<dbReference type="STRING" id="360107.CHAB381_1667"/>
<dbReference type="KEGG" id="cha:CHAB381_1667"/>
<dbReference type="eggNOG" id="COG0080">
    <property type="taxonomic scope" value="Bacteria"/>
</dbReference>
<dbReference type="HOGENOM" id="CLU_074237_2_0_7"/>
<dbReference type="OrthoDB" id="9802408at2"/>
<dbReference type="Proteomes" id="UP000002407">
    <property type="component" value="Chromosome"/>
</dbReference>
<dbReference type="GO" id="GO:0022625">
    <property type="term" value="C:cytosolic large ribosomal subunit"/>
    <property type="evidence" value="ECO:0007669"/>
    <property type="project" value="TreeGrafter"/>
</dbReference>
<dbReference type="GO" id="GO:0070180">
    <property type="term" value="F:large ribosomal subunit rRNA binding"/>
    <property type="evidence" value="ECO:0007669"/>
    <property type="project" value="UniProtKB-UniRule"/>
</dbReference>
<dbReference type="GO" id="GO:0003735">
    <property type="term" value="F:structural constituent of ribosome"/>
    <property type="evidence" value="ECO:0007669"/>
    <property type="project" value="InterPro"/>
</dbReference>
<dbReference type="GO" id="GO:0006412">
    <property type="term" value="P:translation"/>
    <property type="evidence" value="ECO:0007669"/>
    <property type="project" value="UniProtKB-UniRule"/>
</dbReference>
<dbReference type="CDD" id="cd00349">
    <property type="entry name" value="Ribosomal_L11"/>
    <property type="match status" value="1"/>
</dbReference>
<dbReference type="FunFam" id="1.10.10.250:FF:000001">
    <property type="entry name" value="50S ribosomal protein L11"/>
    <property type="match status" value="1"/>
</dbReference>
<dbReference type="FunFam" id="3.30.1550.10:FF:000001">
    <property type="entry name" value="50S ribosomal protein L11"/>
    <property type="match status" value="1"/>
</dbReference>
<dbReference type="Gene3D" id="1.10.10.250">
    <property type="entry name" value="Ribosomal protein L11, C-terminal domain"/>
    <property type="match status" value="1"/>
</dbReference>
<dbReference type="Gene3D" id="3.30.1550.10">
    <property type="entry name" value="Ribosomal protein L11/L12, N-terminal domain"/>
    <property type="match status" value="1"/>
</dbReference>
<dbReference type="HAMAP" id="MF_00736">
    <property type="entry name" value="Ribosomal_uL11"/>
    <property type="match status" value="1"/>
</dbReference>
<dbReference type="InterPro" id="IPR000911">
    <property type="entry name" value="Ribosomal_uL11"/>
</dbReference>
<dbReference type="InterPro" id="IPR006519">
    <property type="entry name" value="Ribosomal_uL11_bac-typ"/>
</dbReference>
<dbReference type="InterPro" id="IPR020783">
    <property type="entry name" value="Ribosomal_uL11_C"/>
</dbReference>
<dbReference type="InterPro" id="IPR036769">
    <property type="entry name" value="Ribosomal_uL11_C_sf"/>
</dbReference>
<dbReference type="InterPro" id="IPR020785">
    <property type="entry name" value="Ribosomal_uL11_CS"/>
</dbReference>
<dbReference type="InterPro" id="IPR020784">
    <property type="entry name" value="Ribosomal_uL11_N"/>
</dbReference>
<dbReference type="InterPro" id="IPR036796">
    <property type="entry name" value="Ribosomal_uL11_N_sf"/>
</dbReference>
<dbReference type="NCBIfam" id="TIGR01632">
    <property type="entry name" value="L11_bact"/>
    <property type="match status" value="1"/>
</dbReference>
<dbReference type="PANTHER" id="PTHR11661">
    <property type="entry name" value="60S RIBOSOMAL PROTEIN L12"/>
    <property type="match status" value="1"/>
</dbReference>
<dbReference type="PANTHER" id="PTHR11661:SF1">
    <property type="entry name" value="LARGE RIBOSOMAL SUBUNIT PROTEIN UL11M"/>
    <property type="match status" value="1"/>
</dbReference>
<dbReference type="Pfam" id="PF00298">
    <property type="entry name" value="Ribosomal_L11"/>
    <property type="match status" value="1"/>
</dbReference>
<dbReference type="Pfam" id="PF03946">
    <property type="entry name" value="Ribosomal_L11_N"/>
    <property type="match status" value="1"/>
</dbReference>
<dbReference type="SMART" id="SM00649">
    <property type="entry name" value="RL11"/>
    <property type="match status" value="1"/>
</dbReference>
<dbReference type="SUPFAM" id="SSF54747">
    <property type="entry name" value="Ribosomal L11/L12e N-terminal domain"/>
    <property type="match status" value="1"/>
</dbReference>
<dbReference type="SUPFAM" id="SSF46906">
    <property type="entry name" value="Ribosomal protein L11, C-terminal domain"/>
    <property type="match status" value="1"/>
</dbReference>
<dbReference type="PROSITE" id="PS00359">
    <property type="entry name" value="RIBOSOMAL_L11"/>
    <property type="match status" value="1"/>
</dbReference>
<feature type="chain" id="PRO_1000046161" description="Large ribosomal subunit protein uL11">
    <location>
        <begin position="1"/>
        <end position="140"/>
    </location>
</feature>
<evidence type="ECO:0000255" key="1">
    <source>
        <dbReference type="HAMAP-Rule" id="MF_00736"/>
    </source>
</evidence>
<evidence type="ECO:0000305" key="2"/>
<comment type="function">
    <text evidence="1">Forms part of the ribosomal stalk which helps the ribosome interact with GTP-bound translation factors.</text>
</comment>
<comment type="subunit">
    <text evidence="1">Part of the ribosomal stalk of the 50S ribosomal subunit. Interacts with L10 and the large rRNA to form the base of the stalk. L10 forms an elongated spine to which L12 dimers bind in a sequential fashion forming a multimeric L10(L12)X complex.</text>
</comment>
<comment type="PTM">
    <text evidence="1">One or more lysine residues are methylated.</text>
</comment>
<comment type="similarity">
    <text evidence="1">Belongs to the universal ribosomal protein uL11 family.</text>
</comment>
<proteinExistence type="inferred from homology"/>
<name>RL11_CAMHC</name>
<sequence length="140" mass="15056">MAKKVIGEIKLQIAATKANPSPPVGPALGQKGVNIMEFCKAFNEKTKGMEGFNIPVIITVYADRSFTFITKQPPATDLIKKTAGVQKGSDNPLKNKVGKLTKAQVLEIVEKKMADLNTKDKEQAARIIAGSARSMGITVE</sequence>
<reference key="1">
    <citation type="submission" date="2007-07" db="EMBL/GenBank/DDBJ databases">
        <title>Complete genome sequence of Campylobacter hominis ATCC BAA-381, a commensal isolated from the human gastrointestinal tract.</title>
        <authorList>
            <person name="Fouts D.E."/>
            <person name="Mongodin E.F."/>
            <person name="Puiu D."/>
            <person name="Sebastian Y."/>
            <person name="Miller W.G."/>
            <person name="Mandrell R.E."/>
            <person name="Nelson K.E."/>
        </authorList>
    </citation>
    <scope>NUCLEOTIDE SEQUENCE [LARGE SCALE GENOMIC DNA]</scope>
    <source>
        <strain>ATCC BAA-381 / DSM 21671 / CCUG 45161 / LMG 19568 / NCTC 13146 / CH001A</strain>
    </source>
</reference>
<keyword id="KW-0488">Methylation</keyword>
<keyword id="KW-1185">Reference proteome</keyword>
<keyword id="KW-0687">Ribonucleoprotein</keyword>
<keyword id="KW-0689">Ribosomal protein</keyword>
<keyword id="KW-0694">RNA-binding</keyword>
<keyword id="KW-0699">rRNA-binding</keyword>